<reference key="1">
    <citation type="journal article" date="1998" name="Biochim. Biophys. Acta">
        <title>8-cysteine TGF-BP structural motifs are the site of covalent binding between mouse LTBP-3, LTBP-2, and latent TGF-beta 1.</title>
        <authorList>
            <person name="Yin W."/>
            <person name="Fang J."/>
            <person name="Smiley E."/>
            <person name="Bonadio J."/>
        </authorList>
    </citation>
    <scope>NUCLEOTIDE SEQUENCE [MRNA]</scope>
    <scope>INTERACTION WITH TGFB1</scope>
</reference>
<reference key="2">
    <citation type="journal article" date="2005" name="Science">
        <title>The transcriptional landscape of the mammalian genome.</title>
        <authorList>
            <person name="Carninci P."/>
            <person name="Kasukawa T."/>
            <person name="Katayama S."/>
            <person name="Gough J."/>
            <person name="Frith M.C."/>
            <person name="Maeda N."/>
            <person name="Oyama R."/>
            <person name="Ravasi T."/>
            <person name="Lenhard B."/>
            <person name="Wells C."/>
            <person name="Kodzius R."/>
            <person name="Shimokawa K."/>
            <person name="Bajic V.B."/>
            <person name="Brenner S.E."/>
            <person name="Batalov S."/>
            <person name="Forrest A.R."/>
            <person name="Zavolan M."/>
            <person name="Davis M.J."/>
            <person name="Wilming L.G."/>
            <person name="Aidinis V."/>
            <person name="Allen J.E."/>
            <person name="Ambesi-Impiombato A."/>
            <person name="Apweiler R."/>
            <person name="Aturaliya R.N."/>
            <person name="Bailey T.L."/>
            <person name="Bansal M."/>
            <person name="Baxter L."/>
            <person name="Beisel K.W."/>
            <person name="Bersano T."/>
            <person name="Bono H."/>
            <person name="Chalk A.M."/>
            <person name="Chiu K.P."/>
            <person name="Choudhary V."/>
            <person name="Christoffels A."/>
            <person name="Clutterbuck D.R."/>
            <person name="Crowe M.L."/>
            <person name="Dalla E."/>
            <person name="Dalrymple B.P."/>
            <person name="de Bono B."/>
            <person name="Della Gatta G."/>
            <person name="di Bernardo D."/>
            <person name="Down T."/>
            <person name="Engstrom P."/>
            <person name="Fagiolini M."/>
            <person name="Faulkner G."/>
            <person name="Fletcher C.F."/>
            <person name="Fukushima T."/>
            <person name="Furuno M."/>
            <person name="Futaki S."/>
            <person name="Gariboldi M."/>
            <person name="Georgii-Hemming P."/>
            <person name="Gingeras T.R."/>
            <person name="Gojobori T."/>
            <person name="Green R.E."/>
            <person name="Gustincich S."/>
            <person name="Harbers M."/>
            <person name="Hayashi Y."/>
            <person name="Hensch T.K."/>
            <person name="Hirokawa N."/>
            <person name="Hill D."/>
            <person name="Huminiecki L."/>
            <person name="Iacono M."/>
            <person name="Ikeo K."/>
            <person name="Iwama A."/>
            <person name="Ishikawa T."/>
            <person name="Jakt M."/>
            <person name="Kanapin A."/>
            <person name="Katoh M."/>
            <person name="Kawasawa Y."/>
            <person name="Kelso J."/>
            <person name="Kitamura H."/>
            <person name="Kitano H."/>
            <person name="Kollias G."/>
            <person name="Krishnan S.P."/>
            <person name="Kruger A."/>
            <person name="Kummerfeld S.K."/>
            <person name="Kurochkin I.V."/>
            <person name="Lareau L.F."/>
            <person name="Lazarevic D."/>
            <person name="Lipovich L."/>
            <person name="Liu J."/>
            <person name="Liuni S."/>
            <person name="McWilliam S."/>
            <person name="Madan Babu M."/>
            <person name="Madera M."/>
            <person name="Marchionni L."/>
            <person name="Matsuda H."/>
            <person name="Matsuzawa S."/>
            <person name="Miki H."/>
            <person name="Mignone F."/>
            <person name="Miyake S."/>
            <person name="Morris K."/>
            <person name="Mottagui-Tabar S."/>
            <person name="Mulder N."/>
            <person name="Nakano N."/>
            <person name="Nakauchi H."/>
            <person name="Ng P."/>
            <person name="Nilsson R."/>
            <person name="Nishiguchi S."/>
            <person name="Nishikawa S."/>
            <person name="Nori F."/>
            <person name="Ohara O."/>
            <person name="Okazaki Y."/>
            <person name="Orlando V."/>
            <person name="Pang K.C."/>
            <person name="Pavan W.J."/>
            <person name="Pavesi G."/>
            <person name="Pesole G."/>
            <person name="Petrovsky N."/>
            <person name="Piazza S."/>
            <person name="Reed J."/>
            <person name="Reid J.F."/>
            <person name="Ring B.Z."/>
            <person name="Ringwald M."/>
            <person name="Rost B."/>
            <person name="Ruan Y."/>
            <person name="Salzberg S.L."/>
            <person name="Sandelin A."/>
            <person name="Schneider C."/>
            <person name="Schoenbach C."/>
            <person name="Sekiguchi K."/>
            <person name="Semple C.A."/>
            <person name="Seno S."/>
            <person name="Sessa L."/>
            <person name="Sheng Y."/>
            <person name="Shibata Y."/>
            <person name="Shimada H."/>
            <person name="Shimada K."/>
            <person name="Silva D."/>
            <person name="Sinclair B."/>
            <person name="Sperling S."/>
            <person name="Stupka E."/>
            <person name="Sugiura K."/>
            <person name="Sultana R."/>
            <person name="Takenaka Y."/>
            <person name="Taki K."/>
            <person name="Tammoja K."/>
            <person name="Tan S.L."/>
            <person name="Tang S."/>
            <person name="Taylor M.S."/>
            <person name="Tegner J."/>
            <person name="Teichmann S.A."/>
            <person name="Ueda H.R."/>
            <person name="van Nimwegen E."/>
            <person name="Verardo R."/>
            <person name="Wei C.L."/>
            <person name="Yagi K."/>
            <person name="Yamanishi H."/>
            <person name="Zabarovsky E."/>
            <person name="Zhu S."/>
            <person name="Zimmer A."/>
            <person name="Hide W."/>
            <person name="Bult C."/>
            <person name="Grimmond S.M."/>
            <person name="Teasdale R.D."/>
            <person name="Liu E.T."/>
            <person name="Brusic V."/>
            <person name="Quackenbush J."/>
            <person name="Wahlestedt C."/>
            <person name="Mattick J.S."/>
            <person name="Hume D.A."/>
            <person name="Kai C."/>
            <person name="Sasaki D."/>
            <person name="Tomaru Y."/>
            <person name="Fukuda S."/>
            <person name="Kanamori-Katayama M."/>
            <person name="Suzuki M."/>
            <person name="Aoki J."/>
            <person name="Arakawa T."/>
            <person name="Iida J."/>
            <person name="Imamura K."/>
            <person name="Itoh M."/>
            <person name="Kato T."/>
            <person name="Kawaji H."/>
            <person name="Kawagashira N."/>
            <person name="Kawashima T."/>
            <person name="Kojima M."/>
            <person name="Kondo S."/>
            <person name="Konno H."/>
            <person name="Nakano K."/>
            <person name="Ninomiya N."/>
            <person name="Nishio T."/>
            <person name="Okada M."/>
            <person name="Plessy C."/>
            <person name="Shibata K."/>
            <person name="Shiraki T."/>
            <person name="Suzuki S."/>
            <person name="Tagami M."/>
            <person name="Waki K."/>
            <person name="Watahiki A."/>
            <person name="Okamura-Oho Y."/>
            <person name="Suzuki H."/>
            <person name="Kawai J."/>
            <person name="Hayashizaki Y."/>
        </authorList>
    </citation>
    <scope>NUCLEOTIDE SEQUENCE [LARGE SCALE MRNA] OF 1-778</scope>
    <source>
        <strain>C57BL/6J</strain>
        <tissue>Head</tissue>
    </source>
</reference>
<reference key="3">
    <citation type="submission" date="2009-01" db="UniProtKB">
        <authorList>
            <person name="Lubec G."/>
            <person name="Sunyer B."/>
            <person name="Chen W.-Q."/>
        </authorList>
    </citation>
    <scope>PROTEIN SEQUENCE OF 205-211</scope>
    <scope>IDENTIFICATION BY MASS SPECTROMETRY</scope>
    <source>
        <strain>OF1</strain>
        <tissue>Hippocampus</tissue>
    </source>
</reference>
<reference key="4">
    <citation type="journal article" date="1999" name="Cytokine Growth Factor Rev.">
        <title>Latent transforming growth factor-beta binding proteins (LTBPs) -- structural extracellular matrix proteins for targeting TGF-beta action.</title>
        <authorList>
            <person name="Saharinen J."/>
            <person name="Hyytiainen M."/>
            <person name="Taipale J."/>
            <person name="Keski-Oja J."/>
        </authorList>
    </citation>
    <scope>REVIEW</scope>
</reference>
<reference key="5">
    <citation type="journal article" date="2000" name="Biochem. J.">
        <title>The latent transforming growth factor beta binding protein (LTBP) family.</title>
        <authorList>
            <person name="Oklu R."/>
            <person name="Hesketh R."/>
        </authorList>
    </citation>
    <scope>REVIEW</scope>
</reference>
<reference key="6">
    <citation type="journal article" date="2009" name="Am. J. Hum. Genet.">
        <title>Null mutations in LTBP2 cause primary congenital glaucoma.</title>
        <authorList>
            <person name="Ali M."/>
            <person name="McKibbin M."/>
            <person name="Booth A."/>
            <person name="Parry D.A."/>
            <person name="Jain P."/>
            <person name="Riazuddin S.A."/>
            <person name="Hejtmancik J.F."/>
            <person name="Khan S.N."/>
            <person name="Firasat S."/>
            <person name="Shires M."/>
            <person name="Gilmour D.F."/>
            <person name="Towns K."/>
            <person name="Murphy A.L."/>
            <person name="Azmanov D."/>
            <person name="Tournev I."/>
            <person name="Cherninkova S."/>
            <person name="Jafri H."/>
            <person name="Raashid Y."/>
            <person name="Toomes C."/>
            <person name="Craig J."/>
            <person name="Mackey D.A."/>
            <person name="Kalaydjieva L."/>
            <person name="Riazuddin S."/>
            <person name="Inglehearn C.F."/>
        </authorList>
    </citation>
    <scope>TISSUE SPECIFICITY</scope>
</reference>
<reference key="7">
    <citation type="journal article" date="2010" name="Cell">
        <title>A tissue-specific atlas of mouse protein phosphorylation and expression.</title>
        <authorList>
            <person name="Huttlin E.L."/>
            <person name="Jedrychowski M.P."/>
            <person name="Elias J.E."/>
            <person name="Goswami T."/>
            <person name="Rad R."/>
            <person name="Beausoleil S.A."/>
            <person name="Villen J."/>
            <person name="Haas W."/>
            <person name="Sowa M.E."/>
            <person name="Gygi S.P."/>
        </authorList>
    </citation>
    <scope>PHOSPHORYLATION [LARGE SCALE ANALYSIS] AT SER-491</scope>
    <scope>IDENTIFICATION BY MASS SPECTROMETRY [LARGE SCALE ANALYSIS]</scope>
    <source>
        <tissue>Lung</tissue>
        <tissue>Spleen</tissue>
    </source>
</reference>
<sequence length="1813" mass="195829">MRAPTTARCSGCIQRVRWRGFLPLVLAVLMGTSHAQRDSIGRYEPASRDANRLWHPVGSHPAAAAAKVYSLFREPDAPVPGLSPSEWNQPAQGNPGWLAEAEARRPPRTQQLRRVQPPVQTRRSHPRGQQQIAARAAPSVARLETPQRPAAARRGRLTGRNVCGGQCCPGWTTSNSTNHCIKPVCQPPCQNRGSCSRPQVCICRSGFRGARCEEVIPEEEFDPQNARPVPRRSVERAPGPHRSSEARGSLVTRIQPLVPPPSPPPSRRLSQPWPLQQHSGPSRTVRRYPATGANGQLMSNALPSGLELRDSSPQAAHVNHLSPPWGLNLTEKIKKIKVVFTPTICKQTCARGRCANSCEKGDTTTLYSQGGHGHDPKSGFRIYFCQIPCLNGGRCIGRDECWCPANSTGKFCHLPVPQPDREPAGRGSRHRTLLEGPLKQSTFTLPLSNQLASVNPSLVKVQIHHPPEASVQIHQVARVRGELDPVLEDNSVETRASHRPHGNLGHSPWASNSIPARAGEAPRPPPVLSRHYGLLGQCYLSTVNGQCANPLGSLTSQEDCCGSVGTFWGVTSCAPCPPRQEGPAFPVIENGQLECPQGYKRLNLSHCQDINECLTLGLCKDSECVNTRGSYLCTCRPGLMLDPSRSRCVSDKAVSMQQGLCYRSLGSGTCTLPLVHRITKQICCCSRVGKAWGSTCEQCPLPGTEAFREICPAGHGYTYSSSDIRLSMRKAEEEELASPLREQTEQSTAPPPGQAERQPLRAATATWIEAETLPDKGDSRAVQITTSAPHLPARVPGDATGRPAPSLPGQGIPESPAEEQVIPSSDVLVTHSPPDFDPCFAGASNICGPGTCVSLPNGYRCVCSPGYQLHPSQDYCTDDNECMRNPCEGRGRCVNSVGSYSCLCYPGYTLVTLGDTQECQDIDECEQPGVCSGGRCSNTEGSYHCECDRGYIMVRKGHCQDINECRHPGTCPDGRCVNSPGSYTCLACEEGYVGQSGSCVDVNECLTPGICTHGRCINMEGSFRCSCEPGYEVTPDKKGCRDVDECASRASCPTGLCLNTEGSFTCSACQSGYWVNEDGTACEDLDECAFPGVCPTGVCTNTVGSFSCKDCDQGYRPNPLGNRCEDVDECEGPQSSCRGGECKNTEGSYQCLCHQGFQLVNGTMCEDVNECVGEEHCAPHGECLNSLGSFFCLCAPGFASAEGGTRCQDVDECAATDPCPGGHCVNTEGSFSCLCETASFQPSPDSGECLDIDECEDREDPVCGAWRCENSPGSYRCILDCQPGFYVAPNGDCIDIDECANDTVCGNHGFCDNTDGSFRCLCDQGFETSPSGWECVDVNECELMMAVCGDALCENVEGSFLCLCASDLEEYDAEEGHCRPRVAGAQRIPEVRTEDQAPSLIRMECYSEHNGGPPCSQILGQNSTQAECCCTQGARWGKACAPCPSEDSVEFSQLCPSGQGYIPVEGAWTFGQTMYTDADECVLFGPALCQNGRCSNIVPGYICLCNPGYHYDASSRKCQDHNECQDLACENGECVNQEGSFHCLCNPPLTLDLSGQRCVNTTSSTEDFPDHDIHMDICWKKVTNDVCSQPLRGHHTTYTECCCQDGEAWSQQCALCPPRSSEVYAQLCNVARIEAERGAGIHFRPGYEYGPGLDDLPENLYGPDGAPFYNYLGPEDTAPEPPFSNPASQPGDNTPVLEPPLQPSELQPHYLASHSEPPASFEGLQAEECGILNGCENGRCVRVREGYTCDCFEGFQLDAPTLACVDVNECEDLNGPARLCAHGHCENTEGSYRCHCSPGYVAEPGPPHCAAKE</sequence>
<comment type="function">
    <text evidence="4">May play an integral structural role in elastic-fiber architectural organization and/or assembly.</text>
</comment>
<comment type="subunit">
    <text evidence="4">Forms part of the large latent transforming growth factor beta precursor complex; removal is essential for activation of complex. Interacts with SDC4. Interacts (via C-terminal domain) with FBN1 (via N-terminal domain) in a Ca(+2)-dependent manner.</text>
</comment>
<comment type="subcellular location">
    <subcellularLocation>
        <location evidence="4">Secreted</location>
        <location evidence="4">Extracellular space</location>
        <location evidence="4">Extracellular matrix</location>
    </subcellularLocation>
</comment>
<comment type="tissue specificity">
    <text evidence="9">Expressed in the anterior chamber of the eye.</text>
</comment>
<comment type="PTM">
    <text evidence="4">N-Glycosylated.</text>
</comment>
<comment type="PTM">
    <text evidence="3">Contains hydroxylated asparagine residues.</text>
</comment>
<comment type="similarity">
    <text evidence="10">Belongs to the LTBP family.</text>
</comment>
<comment type="sequence caution" evidence="10">
    <conflict type="erroneous initiation">
        <sequence resource="EMBL-CDS" id="AAB61611"/>
    </conflict>
</comment>
<comment type="sequence caution" evidence="10">
    <conflict type="erroneous initiation">
        <sequence resource="EMBL-CDS" id="BAC35229"/>
    </conflict>
</comment>
<keyword id="KW-0903">Direct protein sequencing</keyword>
<keyword id="KW-1015">Disulfide bond</keyword>
<keyword id="KW-0245">EGF-like domain</keyword>
<keyword id="KW-0272">Extracellular matrix</keyword>
<keyword id="KW-0325">Glycoprotein</keyword>
<keyword id="KW-0340">Growth factor binding</keyword>
<keyword id="KW-0358">Heparin-binding</keyword>
<keyword id="KW-0379">Hydroxylation</keyword>
<keyword id="KW-0597">Phosphoprotein</keyword>
<keyword id="KW-1185">Reference proteome</keyword>
<keyword id="KW-0677">Repeat</keyword>
<keyword id="KW-0964">Secreted</keyword>
<keyword id="KW-0732">Signal</keyword>
<protein>
    <recommendedName>
        <fullName>Latent-transforming growth factor beta-binding protein 2</fullName>
        <shortName>LTBP-2</shortName>
    </recommendedName>
</protein>
<feature type="signal peptide" evidence="2">
    <location>
        <begin position="1"/>
        <end position="35"/>
    </location>
</feature>
<feature type="chain" id="PRO_0000007644" description="Latent-transforming growth factor beta-binding protein 2">
    <location>
        <begin position="36"/>
        <end position="1813"/>
    </location>
</feature>
<feature type="domain" description="EGF-like 1" evidence="6">
    <location>
        <begin position="181"/>
        <end position="213"/>
    </location>
</feature>
<feature type="domain" description="EGF-like 2" evidence="6">
    <location>
        <begin position="381"/>
        <end position="413"/>
    </location>
</feature>
<feature type="domain" description="TB 1" evidence="7">
    <location>
        <begin position="536"/>
        <end position="588"/>
    </location>
</feature>
<feature type="domain" description="EGF-like 3; calcium-binding" evidence="6">
    <location>
        <begin position="609"/>
        <end position="649"/>
    </location>
</feature>
<feature type="domain" description="TB 2" evidence="7">
    <location>
        <begin position="659"/>
        <end position="711"/>
    </location>
</feature>
<feature type="domain" description="EGF-like 4" evidence="6">
    <location>
        <begin position="835"/>
        <end position="877"/>
    </location>
</feature>
<feature type="domain" description="EGF-like 5; calcium-binding" evidence="6">
    <location>
        <begin position="878"/>
        <end position="920"/>
    </location>
</feature>
<feature type="domain" description="EGF-like 6; calcium-binding" evidence="6">
    <location>
        <begin position="921"/>
        <end position="960"/>
    </location>
</feature>
<feature type="domain" description="EGF-like 7; calcium-binding" evidence="6">
    <location>
        <begin position="961"/>
        <end position="1000"/>
    </location>
</feature>
<feature type="domain" description="EGF-like 8; calcium-binding" evidence="6">
    <location>
        <begin position="1001"/>
        <end position="1041"/>
    </location>
</feature>
<feature type="domain" description="EGF-like 9; calcium-binding" evidence="6">
    <location>
        <begin position="1042"/>
        <end position="1083"/>
    </location>
</feature>
<feature type="domain" description="EGF-like 10; calcium-binding" evidence="6">
    <location>
        <begin position="1084"/>
        <end position="1125"/>
    </location>
</feature>
<feature type="domain" description="EGF-like 11; calcium-binding" evidence="6">
    <location>
        <begin position="1126"/>
        <end position="1166"/>
    </location>
</feature>
<feature type="domain" description="EGF-like 12; calcium-binding" evidence="6">
    <location>
        <begin position="1167"/>
        <end position="1208"/>
    </location>
</feature>
<feature type="domain" description="EGF-like 13; calcium-binding" evidence="6">
    <location>
        <begin position="1209"/>
        <end position="1250"/>
    </location>
</feature>
<feature type="domain" description="EGF-like 14; calcium-binding" evidence="6">
    <location>
        <begin position="1251"/>
        <end position="1294"/>
    </location>
</feature>
<feature type="domain" description="EGF-like 15; calcium-binding" evidence="6">
    <location>
        <begin position="1295"/>
        <end position="1336"/>
    </location>
</feature>
<feature type="domain" description="EGF-like 16; calcium-binding" evidence="6">
    <location>
        <begin position="1337"/>
        <end position="1379"/>
    </location>
</feature>
<feature type="domain" description="TB 3" evidence="7">
    <location>
        <begin position="1403"/>
        <end position="1455"/>
    </location>
</feature>
<feature type="domain" description="EGF-like 17; calcium-binding" evidence="6">
    <location>
        <begin position="1477"/>
        <end position="1519"/>
    </location>
</feature>
<feature type="domain" description="EGF-like 18; calcium-binding" evidence="6">
    <location>
        <begin position="1520"/>
        <end position="1559"/>
    </location>
</feature>
<feature type="domain" description="TB 4" evidence="7">
    <location>
        <begin position="1576"/>
        <end position="1628"/>
    </location>
</feature>
<feature type="domain" description="EGF-like 19; calcium-binding" evidence="6">
    <location>
        <begin position="1725"/>
        <end position="1765"/>
    </location>
</feature>
<feature type="domain" description="EGF-like 20; calcium-binding" evidence="6">
    <location>
        <begin position="1766"/>
        <end position="1810"/>
    </location>
</feature>
<feature type="region of interest" description="Heparin-binding" evidence="1">
    <location>
        <begin position="94"/>
        <end position="115"/>
    </location>
</feature>
<feature type="region of interest" description="Disordered" evidence="8">
    <location>
        <begin position="103"/>
        <end position="152"/>
    </location>
</feature>
<feature type="region of interest" description="Disordered" evidence="8">
    <location>
        <begin position="220"/>
        <end position="305"/>
    </location>
</feature>
<feature type="region of interest" description="Heparin-binding" evidence="1">
    <location>
        <begin position="226"/>
        <end position="243"/>
    </location>
</feature>
<feature type="region of interest" description="Disordered" evidence="8">
    <location>
        <begin position="492"/>
        <end position="524"/>
    </location>
</feature>
<feature type="region of interest" description="Disordered" evidence="8">
    <location>
        <begin position="730"/>
        <end position="761"/>
    </location>
</feature>
<feature type="region of interest" description="Disordered" evidence="8">
    <location>
        <begin position="787"/>
        <end position="819"/>
    </location>
</feature>
<feature type="region of interest" description="C-terminal domain" evidence="4">
    <location>
        <begin position="1631"/>
        <end position="1813"/>
    </location>
</feature>
<feature type="region of interest" description="Disordered" evidence="8">
    <location>
        <begin position="1671"/>
        <end position="1717"/>
    </location>
</feature>
<feature type="compositionally biased region" description="Polar residues" evidence="8">
    <location>
        <begin position="108"/>
        <end position="132"/>
    </location>
</feature>
<feature type="compositionally biased region" description="Pro residues" evidence="8">
    <location>
        <begin position="257"/>
        <end position="266"/>
    </location>
</feature>
<feature type="compositionally biased region" description="Polar residues" evidence="8">
    <location>
        <begin position="293"/>
        <end position="302"/>
    </location>
</feature>
<feature type="binding site" evidence="1">
    <location>
        <begin position="329"/>
        <end position="339"/>
    </location>
    <ligand>
        <name>heparin</name>
        <dbReference type="ChEBI" id="CHEBI:28304"/>
    </ligand>
</feature>
<feature type="modified residue" description="Phosphoserine" evidence="11">
    <location>
        <position position="491"/>
    </location>
</feature>
<feature type="glycosylation site" description="N-linked (GlcNAc...) asparagine" evidence="5">
    <location>
        <position position="175"/>
    </location>
</feature>
<feature type="glycosylation site" description="N-linked (GlcNAc...) asparagine" evidence="5">
    <location>
        <position position="328"/>
    </location>
</feature>
<feature type="glycosylation site" description="N-linked (GlcNAc...) asparagine" evidence="5">
    <location>
        <position position="406"/>
    </location>
</feature>
<feature type="glycosylation site" description="N-linked (GlcNAc...) asparagine" evidence="5">
    <location>
        <position position="603"/>
    </location>
</feature>
<feature type="glycosylation site" description="N-linked (GlcNAc...) asparagine" evidence="5">
    <location>
        <position position="1161"/>
    </location>
</feature>
<feature type="glycosylation site" description="N-linked (GlcNAc...) asparagine" evidence="5">
    <location>
        <position position="1301"/>
    </location>
</feature>
<feature type="glycosylation site" description="N-linked (GlcNAc...) asparagine" evidence="5">
    <location>
        <position position="1422"/>
    </location>
</feature>
<feature type="glycosylation site" description="N-linked (GlcNAc...) asparagine" evidence="5">
    <location>
        <position position="1560"/>
    </location>
</feature>
<feature type="disulfide bond" evidence="6">
    <location>
        <begin position="185"/>
        <end position="195"/>
    </location>
</feature>
<feature type="disulfide bond" evidence="6">
    <location>
        <begin position="189"/>
        <end position="201"/>
    </location>
</feature>
<feature type="disulfide bond" evidence="6">
    <location>
        <begin position="203"/>
        <end position="212"/>
    </location>
</feature>
<feature type="disulfide bond" evidence="6">
    <location>
        <begin position="385"/>
        <end position="395"/>
    </location>
</feature>
<feature type="disulfide bond" evidence="6">
    <location>
        <begin position="389"/>
        <end position="401"/>
    </location>
</feature>
<feature type="disulfide bond" evidence="6">
    <location>
        <begin position="403"/>
        <end position="412"/>
    </location>
</feature>
<feature type="disulfide bond" evidence="7">
    <location>
        <begin position="538"/>
        <end position="560"/>
    </location>
</feature>
<feature type="disulfide bond" evidence="7">
    <location>
        <begin position="547"/>
        <end position="573"/>
    </location>
</feature>
<feature type="disulfide bond" evidence="7">
    <location>
        <begin position="561"/>
        <end position="576"/>
    </location>
</feature>
<feature type="disulfide bond" evidence="6">
    <location>
        <begin position="613"/>
        <end position="624"/>
    </location>
</feature>
<feature type="disulfide bond" evidence="6">
    <location>
        <begin position="619"/>
        <end position="633"/>
    </location>
</feature>
<feature type="disulfide bond" evidence="6">
    <location>
        <begin position="635"/>
        <end position="648"/>
    </location>
</feature>
<feature type="disulfide bond" evidence="7">
    <location>
        <begin position="661"/>
        <end position="683"/>
    </location>
</feature>
<feature type="disulfide bond" evidence="7">
    <location>
        <begin position="670"/>
        <end position="696"/>
    </location>
</feature>
<feature type="disulfide bond" evidence="7">
    <location>
        <begin position="684"/>
        <end position="699"/>
    </location>
</feature>
<feature type="disulfide bond" evidence="7">
    <location>
        <begin position="685"/>
        <end position="711"/>
    </location>
</feature>
<feature type="disulfide bond" evidence="6">
    <location>
        <begin position="839"/>
        <end position="852"/>
    </location>
</feature>
<feature type="disulfide bond" evidence="6">
    <location>
        <begin position="847"/>
        <end position="861"/>
    </location>
</feature>
<feature type="disulfide bond" evidence="6">
    <location>
        <begin position="863"/>
        <end position="876"/>
    </location>
</feature>
<feature type="disulfide bond" evidence="6">
    <location>
        <begin position="882"/>
        <end position="893"/>
    </location>
</feature>
<feature type="disulfide bond" evidence="6">
    <location>
        <begin position="887"/>
        <end position="902"/>
    </location>
</feature>
<feature type="disulfide bond" evidence="6">
    <location>
        <begin position="904"/>
        <end position="919"/>
    </location>
</feature>
<feature type="disulfide bond" evidence="6">
    <location>
        <begin position="925"/>
        <end position="936"/>
    </location>
</feature>
<feature type="disulfide bond" evidence="6">
    <location>
        <begin position="931"/>
        <end position="945"/>
    </location>
</feature>
<feature type="disulfide bond" evidence="6">
    <location>
        <begin position="947"/>
        <end position="959"/>
    </location>
</feature>
<feature type="disulfide bond" evidence="6">
    <location>
        <begin position="965"/>
        <end position="976"/>
    </location>
</feature>
<feature type="disulfide bond" evidence="6">
    <location>
        <begin position="971"/>
        <end position="985"/>
    </location>
</feature>
<feature type="disulfide bond" evidence="6">
    <location>
        <begin position="988"/>
        <end position="999"/>
    </location>
</feature>
<feature type="disulfide bond" evidence="6">
    <location>
        <begin position="1005"/>
        <end position="1016"/>
    </location>
</feature>
<feature type="disulfide bond" evidence="6">
    <location>
        <begin position="1011"/>
        <end position="1025"/>
    </location>
</feature>
<feature type="disulfide bond" evidence="6">
    <location>
        <begin position="1027"/>
        <end position="1040"/>
    </location>
</feature>
<feature type="disulfide bond" evidence="6">
    <location>
        <begin position="1046"/>
        <end position="1057"/>
    </location>
</feature>
<feature type="disulfide bond" evidence="6">
    <location>
        <begin position="1052"/>
        <end position="1066"/>
    </location>
</feature>
<feature type="disulfide bond" evidence="6">
    <location>
        <begin position="1069"/>
        <end position="1082"/>
    </location>
</feature>
<feature type="disulfide bond" evidence="6">
    <location>
        <begin position="1088"/>
        <end position="1099"/>
    </location>
</feature>
<feature type="disulfide bond" evidence="6">
    <location>
        <begin position="1094"/>
        <end position="1108"/>
    </location>
</feature>
<feature type="disulfide bond" evidence="6">
    <location>
        <begin position="1111"/>
        <end position="1124"/>
    </location>
</feature>
<feature type="disulfide bond" evidence="6">
    <location>
        <begin position="1130"/>
        <end position="1142"/>
    </location>
</feature>
<feature type="disulfide bond" evidence="6">
    <location>
        <begin position="1137"/>
        <end position="1151"/>
    </location>
</feature>
<feature type="disulfide bond" evidence="6">
    <location>
        <begin position="1153"/>
        <end position="1165"/>
    </location>
</feature>
<feature type="disulfide bond" evidence="6">
    <location>
        <begin position="1171"/>
        <end position="1183"/>
    </location>
</feature>
<feature type="disulfide bond" evidence="6">
    <location>
        <begin position="1177"/>
        <end position="1192"/>
    </location>
</feature>
<feature type="disulfide bond" evidence="6">
    <location>
        <begin position="1194"/>
        <end position="1207"/>
    </location>
</feature>
<feature type="disulfide bond" evidence="6">
    <location>
        <begin position="1213"/>
        <end position="1224"/>
    </location>
</feature>
<feature type="disulfide bond" evidence="6">
    <location>
        <begin position="1219"/>
        <end position="1233"/>
    </location>
</feature>
<feature type="disulfide bond" evidence="6">
    <location>
        <begin position="1235"/>
        <end position="1249"/>
    </location>
</feature>
<feature type="disulfide bond" evidence="6">
    <location>
        <begin position="1255"/>
        <end position="1268"/>
    </location>
</feature>
<feature type="disulfide bond" evidence="6">
    <location>
        <begin position="1263"/>
        <end position="1277"/>
    </location>
</feature>
<feature type="disulfide bond" evidence="6">
    <location>
        <begin position="1281"/>
        <end position="1293"/>
    </location>
</feature>
<feature type="disulfide bond" evidence="6">
    <location>
        <begin position="1299"/>
        <end position="1311"/>
    </location>
</feature>
<feature type="disulfide bond" evidence="6">
    <location>
        <begin position="1305"/>
        <end position="1320"/>
    </location>
</feature>
<feature type="disulfide bond" evidence="6">
    <location>
        <begin position="1322"/>
        <end position="1335"/>
    </location>
</feature>
<feature type="disulfide bond" evidence="6">
    <location>
        <begin position="1341"/>
        <end position="1353"/>
    </location>
</feature>
<feature type="disulfide bond" evidence="6">
    <location>
        <begin position="1348"/>
        <end position="1362"/>
    </location>
</feature>
<feature type="disulfide bond" evidence="6">
    <location>
        <begin position="1364"/>
        <end position="1378"/>
    </location>
</feature>
<feature type="disulfide bond" evidence="7">
    <location>
        <begin position="1405"/>
        <end position="1428"/>
    </location>
</feature>
<feature type="disulfide bond" evidence="7">
    <location>
        <begin position="1415"/>
        <end position="1440"/>
    </location>
</feature>
<feature type="disulfide bond" evidence="7">
    <location>
        <begin position="1429"/>
        <end position="1443"/>
    </location>
</feature>
<feature type="disulfide bond" evidence="7">
    <location>
        <begin position="1430"/>
        <end position="1455"/>
    </location>
</feature>
<feature type="disulfide bond" evidence="6">
    <location>
        <begin position="1481"/>
        <end position="1494"/>
    </location>
</feature>
<feature type="disulfide bond" evidence="6">
    <location>
        <begin position="1489"/>
        <end position="1503"/>
    </location>
</feature>
<feature type="disulfide bond" evidence="6">
    <location>
        <begin position="1505"/>
        <end position="1518"/>
    </location>
</feature>
<feature type="disulfide bond" evidence="6">
    <location>
        <begin position="1524"/>
        <end position="1534"/>
    </location>
</feature>
<feature type="disulfide bond" evidence="6">
    <location>
        <begin position="1529"/>
        <end position="1543"/>
    </location>
</feature>
<feature type="disulfide bond" evidence="6">
    <location>
        <begin position="1545"/>
        <end position="1558"/>
    </location>
</feature>
<feature type="disulfide bond" evidence="7">
    <location>
        <begin position="1578"/>
        <end position="1601"/>
    </location>
</feature>
<feature type="disulfide bond" evidence="7">
    <location>
        <begin position="1587"/>
        <end position="1613"/>
    </location>
</feature>
<feature type="disulfide bond" evidence="7">
    <location>
        <begin position="1602"/>
        <end position="1616"/>
    </location>
</feature>
<feature type="disulfide bond" evidence="7">
    <location>
        <begin position="1603"/>
        <end position="1628"/>
    </location>
</feature>
<feature type="disulfide bond" evidence="6">
    <location>
        <begin position="1729"/>
        <end position="1740"/>
    </location>
</feature>
<feature type="disulfide bond" evidence="6">
    <location>
        <begin position="1735"/>
        <end position="1749"/>
    </location>
</feature>
<feature type="disulfide bond" evidence="6">
    <location>
        <begin position="1751"/>
        <end position="1764"/>
    </location>
</feature>
<feature type="disulfide bond" evidence="6">
    <location>
        <begin position="1770"/>
        <end position="1785"/>
    </location>
</feature>
<feature type="disulfide bond" evidence="6">
    <location>
        <begin position="1780"/>
        <end position="1794"/>
    </location>
</feature>
<feature type="disulfide bond" evidence="6">
    <location>
        <begin position="1796"/>
        <end position="1809"/>
    </location>
</feature>
<feature type="sequence conflict" description="In Ref. 2; BAC35229." evidence="10" ref="2">
    <original>Q</original>
    <variation>R</variation>
    <location>
        <position position="14"/>
    </location>
</feature>
<feature type="sequence conflict" description="In Ref. 2; BAC35229." evidence="10" ref="2">
    <original>E</original>
    <variation>G</variation>
    <location>
        <position position="74"/>
    </location>
</feature>
<feature type="sequence conflict" description="In Ref. 2; BAC35229." evidence="10" ref="2">
    <original>W</original>
    <variation>R</variation>
    <location>
        <position position="97"/>
    </location>
</feature>
<feature type="sequence conflict" description="In Ref. 2; BAC35229." evidence="10" ref="2">
    <original>H</original>
    <variation>R</variation>
    <location>
        <position position="498"/>
    </location>
</feature>
<feature type="sequence conflict" description="In Ref. 2; BAC35229." evidence="10" ref="2">
    <original>S</original>
    <variation>E</variation>
    <location>
        <position position="553"/>
    </location>
</feature>
<feature type="sequence conflict" description="In Ref. 2; BAC35229." evidence="10" ref="2">
    <location>
        <begin position="580"/>
        <end position="582"/>
    </location>
</feature>
<feature type="sequence conflict" description="In Ref. 2; BAC35229." evidence="10" ref="2">
    <original>D</original>
    <variation>L</variation>
    <location>
        <position position="778"/>
    </location>
</feature>
<name>LTBP2_MOUSE</name>
<accession>O08999</accession>
<accession>Q8C6W9</accession>
<dbReference type="EMBL" id="AF004874">
    <property type="protein sequence ID" value="AAB61611.1"/>
    <property type="status" value="ALT_INIT"/>
    <property type="molecule type" value="mRNA"/>
</dbReference>
<dbReference type="EMBL" id="AK052980">
    <property type="protein sequence ID" value="BAC35229.1"/>
    <property type="status" value="ALT_INIT"/>
    <property type="molecule type" value="mRNA"/>
</dbReference>
<dbReference type="RefSeq" id="NP_038617.3">
    <property type="nucleotide sequence ID" value="NM_013589.3"/>
</dbReference>
<dbReference type="FunCoup" id="O08999">
    <property type="interactions" value="46"/>
</dbReference>
<dbReference type="IntAct" id="O08999">
    <property type="interactions" value="1"/>
</dbReference>
<dbReference type="MINT" id="O08999"/>
<dbReference type="STRING" id="10090.ENSMUSP00000105883"/>
<dbReference type="GlyCosmos" id="O08999">
    <property type="glycosylation" value="8 sites, No reported glycans"/>
</dbReference>
<dbReference type="GlyGen" id="O08999">
    <property type="glycosylation" value="8 sites"/>
</dbReference>
<dbReference type="iPTMnet" id="O08999"/>
<dbReference type="PhosphoSitePlus" id="O08999"/>
<dbReference type="CPTAC" id="non-CPTAC-3989"/>
<dbReference type="jPOST" id="O08999"/>
<dbReference type="PaxDb" id="10090-ENSMUSP00000002073"/>
<dbReference type="ProteomicsDB" id="290184"/>
<dbReference type="Pumba" id="O08999"/>
<dbReference type="DNASU" id="16997"/>
<dbReference type="GeneID" id="16997"/>
<dbReference type="KEGG" id="mmu:16997"/>
<dbReference type="AGR" id="MGI:99502"/>
<dbReference type="CTD" id="4053"/>
<dbReference type="MGI" id="MGI:99502">
    <property type="gene designation" value="Ltbp2"/>
</dbReference>
<dbReference type="eggNOG" id="KOG1217">
    <property type="taxonomic scope" value="Eukaryota"/>
</dbReference>
<dbReference type="InParanoid" id="O08999"/>
<dbReference type="PhylomeDB" id="O08999"/>
<dbReference type="Reactome" id="R-MMU-2129379">
    <property type="pathway name" value="Molecules associated with elastic fibres"/>
</dbReference>
<dbReference type="Reactome" id="R-MMU-2173789">
    <property type="pathway name" value="TGF-beta receptor signaling activates SMADs"/>
</dbReference>
<dbReference type="BioGRID-ORCS" id="16997">
    <property type="hits" value="1 hit in 59 CRISPR screens"/>
</dbReference>
<dbReference type="ChiTaRS" id="Ltbp2">
    <property type="organism name" value="mouse"/>
</dbReference>
<dbReference type="PRO" id="PR:O08999"/>
<dbReference type="Proteomes" id="UP000000589">
    <property type="component" value="Unplaced"/>
</dbReference>
<dbReference type="RNAct" id="O08999">
    <property type="molecule type" value="protein"/>
</dbReference>
<dbReference type="GO" id="GO:0062023">
    <property type="term" value="C:collagen-containing extracellular matrix"/>
    <property type="evidence" value="ECO:0007005"/>
    <property type="project" value="BHF-UCL"/>
</dbReference>
<dbReference type="GO" id="GO:0005576">
    <property type="term" value="C:extracellular region"/>
    <property type="evidence" value="ECO:0007669"/>
    <property type="project" value="UniProtKB-KW"/>
</dbReference>
<dbReference type="GO" id="GO:0005509">
    <property type="term" value="F:calcium ion binding"/>
    <property type="evidence" value="ECO:0007669"/>
    <property type="project" value="InterPro"/>
</dbReference>
<dbReference type="GO" id="GO:0019838">
    <property type="term" value="F:growth factor binding"/>
    <property type="evidence" value="ECO:0007669"/>
    <property type="project" value="UniProtKB-KW"/>
</dbReference>
<dbReference type="GO" id="GO:0008201">
    <property type="term" value="F:heparin binding"/>
    <property type="evidence" value="ECO:0007669"/>
    <property type="project" value="UniProtKB-KW"/>
</dbReference>
<dbReference type="GO" id="GO:0097435">
    <property type="term" value="P:supramolecular fiber organization"/>
    <property type="evidence" value="ECO:0000315"/>
    <property type="project" value="MGI"/>
</dbReference>
<dbReference type="CDD" id="cd00054">
    <property type="entry name" value="EGF_CA"/>
    <property type="match status" value="13"/>
</dbReference>
<dbReference type="FunFam" id="2.10.25.10:FF:000194">
    <property type="entry name" value="Latent transforming growth factor beta binding protein 2"/>
    <property type="match status" value="2"/>
</dbReference>
<dbReference type="FunFam" id="2.10.25.10:FF:000364">
    <property type="entry name" value="Latent transforming growth factor beta binding protein 2"/>
    <property type="match status" value="1"/>
</dbReference>
<dbReference type="FunFam" id="2.10.25.10:FF:000469">
    <property type="entry name" value="Latent transforming growth factor beta binding protein 2"/>
    <property type="match status" value="1"/>
</dbReference>
<dbReference type="FunFam" id="2.10.25.10:FF:000509">
    <property type="entry name" value="Latent transforming growth factor beta binding protein 2"/>
    <property type="match status" value="1"/>
</dbReference>
<dbReference type="FunFam" id="2.10.25.10:FF:000205">
    <property type="entry name" value="latent-transforming growth factor beta-binding protein 1 isoform X1"/>
    <property type="match status" value="1"/>
</dbReference>
<dbReference type="FunFam" id="3.90.290.10:FF:000004">
    <property type="entry name" value="latent-transforming growth factor beta-binding protein 1 isoform X1"/>
    <property type="match status" value="1"/>
</dbReference>
<dbReference type="FunFam" id="2.10.25.10:FF:000046">
    <property type="entry name" value="Latent-transforming growth factor beta-binding protein 1 isoform x2"/>
    <property type="match status" value="1"/>
</dbReference>
<dbReference type="FunFam" id="3.90.290.10:FF:000019">
    <property type="entry name" value="latent-transforming growth factor beta-binding protein 2 isoform X3"/>
    <property type="match status" value="1"/>
</dbReference>
<dbReference type="FunFam" id="2.10.25.10:FF:000014">
    <property type="entry name" value="Latent-transforming growth factor beta-binding protein 3"/>
    <property type="match status" value="1"/>
</dbReference>
<dbReference type="FunFam" id="2.10.25.10:FF:000077">
    <property type="entry name" value="Latent-transforming growth factor beta-binding protein 3 isoform 1"/>
    <property type="match status" value="1"/>
</dbReference>
<dbReference type="FunFam" id="3.90.290.10:FF:000001">
    <property type="entry name" value="Latent-transforming growth factor beta-binding protein 3 isoform 1"/>
    <property type="match status" value="1"/>
</dbReference>
<dbReference type="FunFam" id="3.90.290.10:FF:000002">
    <property type="entry name" value="Latent-transforming growth factor beta-binding protein 3 isoform 1"/>
    <property type="match status" value="1"/>
</dbReference>
<dbReference type="FunFam" id="2.10.25.10:FF:000056">
    <property type="entry name" value="Latent-transforming growth factor beta-binding protein 3 isoform 2"/>
    <property type="match status" value="1"/>
</dbReference>
<dbReference type="FunFam" id="2.10.25.10:FF:000115">
    <property type="entry name" value="latent-transforming growth factor beta-binding protein 4 isoform X2"/>
    <property type="match status" value="1"/>
</dbReference>
<dbReference type="FunFam" id="2.10.25.10:FF:000024">
    <property type="entry name" value="Putative latent-transforming growth factor beta-binding protein 2"/>
    <property type="match status" value="6"/>
</dbReference>
<dbReference type="FunFam" id="2.10.25.10:FF:000273">
    <property type="entry name" value="Putative latent-transforming growth factor beta-binding protein 2"/>
    <property type="match status" value="1"/>
</dbReference>
<dbReference type="Gene3D" id="2.10.25.10">
    <property type="entry name" value="Laminin"/>
    <property type="match status" value="19"/>
</dbReference>
<dbReference type="Gene3D" id="3.90.290.10">
    <property type="entry name" value="TGF-beta binding (TB) domain"/>
    <property type="match status" value="4"/>
</dbReference>
<dbReference type="InterPro" id="IPR001881">
    <property type="entry name" value="EGF-like_Ca-bd_dom"/>
</dbReference>
<dbReference type="InterPro" id="IPR013032">
    <property type="entry name" value="EGF-like_CS"/>
</dbReference>
<dbReference type="InterPro" id="IPR000742">
    <property type="entry name" value="EGF-like_dom"/>
</dbReference>
<dbReference type="InterPro" id="IPR000152">
    <property type="entry name" value="EGF-type_Asp/Asn_hydroxyl_site"/>
</dbReference>
<dbReference type="InterPro" id="IPR018097">
    <property type="entry name" value="EGF_Ca-bd_CS"/>
</dbReference>
<dbReference type="InterPro" id="IPR009030">
    <property type="entry name" value="Growth_fac_rcpt_cys_sf"/>
</dbReference>
<dbReference type="InterPro" id="IPR049883">
    <property type="entry name" value="NOTCH1_EGF-like"/>
</dbReference>
<dbReference type="InterPro" id="IPR017878">
    <property type="entry name" value="TB_dom"/>
</dbReference>
<dbReference type="InterPro" id="IPR036773">
    <property type="entry name" value="TB_dom_sf"/>
</dbReference>
<dbReference type="InterPro" id="IPR052080">
    <property type="entry name" value="vWF_C/EGF_Fibrillin"/>
</dbReference>
<dbReference type="PANTHER" id="PTHR47333:SF4">
    <property type="entry name" value="EGF-LIKE DOMAIN-CONTAINING PROTEIN"/>
    <property type="match status" value="1"/>
</dbReference>
<dbReference type="PANTHER" id="PTHR47333">
    <property type="entry name" value="VON WILLEBRAND FACTOR C AND EGF DOMAIN-CONTAINING PROTEIN"/>
    <property type="match status" value="1"/>
</dbReference>
<dbReference type="Pfam" id="PF00008">
    <property type="entry name" value="EGF"/>
    <property type="match status" value="1"/>
</dbReference>
<dbReference type="Pfam" id="PF07645">
    <property type="entry name" value="EGF_CA"/>
    <property type="match status" value="16"/>
</dbReference>
<dbReference type="Pfam" id="PF12661">
    <property type="entry name" value="hEGF"/>
    <property type="match status" value="1"/>
</dbReference>
<dbReference type="Pfam" id="PF00683">
    <property type="entry name" value="TB"/>
    <property type="match status" value="4"/>
</dbReference>
<dbReference type="SMART" id="SM00181">
    <property type="entry name" value="EGF"/>
    <property type="match status" value="20"/>
</dbReference>
<dbReference type="SMART" id="SM00179">
    <property type="entry name" value="EGF_CA"/>
    <property type="match status" value="18"/>
</dbReference>
<dbReference type="SUPFAM" id="SSF57196">
    <property type="entry name" value="EGF/Laminin"/>
    <property type="match status" value="3"/>
</dbReference>
<dbReference type="SUPFAM" id="SSF57184">
    <property type="entry name" value="Growth factor receptor domain"/>
    <property type="match status" value="6"/>
</dbReference>
<dbReference type="SUPFAM" id="SSF57581">
    <property type="entry name" value="TB module/8-cys domain"/>
    <property type="match status" value="4"/>
</dbReference>
<dbReference type="PROSITE" id="PS00070">
    <property type="entry name" value="ALDEHYDE_DEHYDR_CYS"/>
    <property type="match status" value="1"/>
</dbReference>
<dbReference type="PROSITE" id="PS00010">
    <property type="entry name" value="ASX_HYDROXYL"/>
    <property type="match status" value="12"/>
</dbReference>
<dbReference type="PROSITE" id="PS00022">
    <property type="entry name" value="EGF_1"/>
    <property type="match status" value="2"/>
</dbReference>
<dbReference type="PROSITE" id="PS01186">
    <property type="entry name" value="EGF_2"/>
    <property type="match status" value="10"/>
</dbReference>
<dbReference type="PROSITE" id="PS50026">
    <property type="entry name" value="EGF_3"/>
    <property type="match status" value="15"/>
</dbReference>
<dbReference type="PROSITE" id="PS01187">
    <property type="entry name" value="EGF_CA"/>
    <property type="match status" value="16"/>
</dbReference>
<dbReference type="PROSITE" id="PS51364">
    <property type="entry name" value="TB"/>
    <property type="match status" value="4"/>
</dbReference>
<evidence type="ECO:0000250" key="1"/>
<evidence type="ECO:0000250" key="2">
    <source>
        <dbReference type="UniProtKB" id="O35806"/>
    </source>
</evidence>
<evidence type="ECO:0000250" key="3">
    <source>
        <dbReference type="UniProtKB" id="Q14766"/>
    </source>
</evidence>
<evidence type="ECO:0000250" key="4">
    <source>
        <dbReference type="UniProtKB" id="Q14767"/>
    </source>
</evidence>
<evidence type="ECO:0000255" key="5"/>
<evidence type="ECO:0000255" key="6">
    <source>
        <dbReference type="PROSITE-ProRule" id="PRU00076"/>
    </source>
</evidence>
<evidence type="ECO:0000255" key="7">
    <source>
        <dbReference type="PROSITE-ProRule" id="PRU00697"/>
    </source>
</evidence>
<evidence type="ECO:0000256" key="8">
    <source>
        <dbReference type="SAM" id="MobiDB-lite"/>
    </source>
</evidence>
<evidence type="ECO:0000269" key="9">
    <source>
    </source>
</evidence>
<evidence type="ECO:0000305" key="10"/>
<evidence type="ECO:0007744" key="11">
    <source>
    </source>
</evidence>
<organism>
    <name type="scientific">Mus musculus</name>
    <name type="common">Mouse</name>
    <dbReference type="NCBI Taxonomy" id="10090"/>
    <lineage>
        <taxon>Eukaryota</taxon>
        <taxon>Metazoa</taxon>
        <taxon>Chordata</taxon>
        <taxon>Craniata</taxon>
        <taxon>Vertebrata</taxon>
        <taxon>Euteleostomi</taxon>
        <taxon>Mammalia</taxon>
        <taxon>Eutheria</taxon>
        <taxon>Euarchontoglires</taxon>
        <taxon>Glires</taxon>
        <taxon>Rodentia</taxon>
        <taxon>Myomorpha</taxon>
        <taxon>Muroidea</taxon>
        <taxon>Muridae</taxon>
        <taxon>Murinae</taxon>
        <taxon>Mus</taxon>
        <taxon>Mus</taxon>
    </lineage>
</organism>
<gene>
    <name type="primary">Ltbp2</name>
</gene>
<proteinExistence type="evidence at protein level"/>